<gene>
    <name evidence="1" type="primary">adk</name>
    <name type="ordered locus">DSY0492</name>
</gene>
<reference key="1">
    <citation type="journal article" date="2006" name="J. Bacteriol.">
        <title>Complete genome sequence of the dehalorespiring bacterium Desulfitobacterium hafniense Y51 and comparison with Dehalococcoides ethenogenes 195.</title>
        <authorList>
            <person name="Nonaka H."/>
            <person name="Keresztes G."/>
            <person name="Shinoda Y."/>
            <person name="Ikenaga Y."/>
            <person name="Abe M."/>
            <person name="Naito K."/>
            <person name="Inatomi K."/>
            <person name="Furukawa K."/>
            <person name="Inui M."/>
            <person name="Yukawa H."/>
        </authorList>
    </citation>
    <scope>NUCLEOTIDE SEQUENCE [LARGE SCALE GENOMIC DNA]</scope>
    <source>
        <strain>Y51</strain>
    </source>
</reference>
<keyword id="KW-0067">ATP-binding</keyword>
<keyword id="KW-0963">Cytoplasm</keyword>
<keyword id="KW-0418">Kinase</keyword>
<keyword id="KW-0479">Metal-binding</keyword>
<keyword id="KW-0545">Nucleotide biosynthesis</keyword>
<keyword id="KW-0547">Nucleotide-binding</keyword>
<keyword id="KW-1185">Reference proteome</keyword>
<keyword id="KW-0808">Transferase</keyword>
<keyword id="KW-0862">Zinc</keyword>
<organism>
    <name type="scientific">Desulfitobacterium hafniense (strain Y51)</name>
    <dbReference type="NCBI Taxonomy" id="138119"/>
    <lineage>
        <taxon>Bacteria</taxon>
        <taxon>Bacillati</taxon>
        <taxon>Bacillota</taxon>
        <taxon>Clostridia</taxon>
        <taxon>Eubacteriales</taxon>
        <taxon>Desulfitobacteriaceae</taxon>
        <taxon>Desulfitobacterium</taxon>
    </lineage>
</organism>
<name>KAD_DESHY</name>
<feature type="chain" id="PRO_1000021726" description="Adenylate kinase">
    <location>
        <begin position="1"/>
        <end position="217"/>
    </location>
</feature>
<feature type="region of interest" description="NMP" evidence="1">
    <location>
        <begin position="30"/>
        <end position="59"/>
    </location>
</feature>
<feature type="region of interest" description="LID" evidence="1">
    <location>
        <begin position="126"/>
        <end position="163"/>
    </location>
</feature>
<feature type="binding site" evidence="1">
    <location>
        <begin position="10"/>
        <end position="15"/>
    </location>
    <ligand>
        <name>ATP</name>
        <dbReference type="ChEBI" id="CHEBI:30616"/>
    </ligand>
</feature>
<feature type="binding site" evidence="1">
    <location>
        <position position="31"/>
    </location>
    <ligand>
        <name>AMP</name>
        <dbReference type="ChEBI" id="CHEBI:456215"/>
    </ligand>
</feature>
<feature type="binding site" evidence="1">
    <location>
        <position position="36"/>
    </location>
    <ligand>
        <name>AMP</name>
        <dbReference type="ChEBI" id="CHEBI:456215"/>
    </ligand>
</feature>
<feature type="binding site" evidence="1">
    <location>
        <begin position="57"/>
        <end position="59"/>
    </location>
    <ligand>
        <name>AMP</name>
        <dbReference type="ChEBI" id="CHEBI:456215"/>
    </ligand>
</feature>
<feature type="binding site" evidence="1">
    <location>
        <begin position="85"/>
        <end position="88"/>
    </location>
    <ligand>
        <name>AMP</name>
        <dbReference type="ChEBI" id="CHEBI:456215"/>
    </ligand>
</feature>
<feature type="binding site" evidence="1">
    <location>
        <position position="92"/>
    </location>
    <ligand>
        <name>AMP</name>
        <dbReference type="ChEBI" id="CHEBI:456215"/>
    </ligand>
</feature>
<feature type="binding site" evidence="1">
    <location>
        <position position="127"/>
    </location>
    <ligand>
        <name>ATP</name>
        <dbReference type="ChEBI" id="CHEBI:30616"/>
    </ligand>
</feature>
<feature type="binding site" evidence="1">
    <location>
        <position position="130"/>
    </location>
    <ligand>
        <name>Zn(2+)</name>
        <dbReference type="ChEBI" id="CHEBI:29105"/>
        <note>structural</note>
    </ligand>
</feature>
<feature type="binding site" evidence="1">
    <location>
        <position position="133"/>
    </location>
    <ligand>
        <name>Zn(2+)</name>
        <dbReference type="ChEBI" id="CHEBI:29105"/>
        <note>structural</note>
    </ligand>
</feature>
<feature type="binding site" evidence="1">
    <location>
        <begin position="136"/>
        <end position="137"/>
    </location>
    <ligand>
        <name>ATP</name>
        <dbReference type="ChEBI" id="CHEBI:30616"/>
    </ligand>
</feature>
<feature type="binding site" evidence="1">
    <location>
        <position position="150"/>
    </location>
    <ligand>
        <name>Zn(2+)</name>
        <dbReference type="ChEBI" id="CHEBI:29105"/>
        <note>structural</note>
    </ligand>
</feature>
<feature type="binding site" evidence="1">
    <location>
        <position position="153"/>
    </location>
    <ligand>
        <name>Zn(2+)</name>
        <dbReference type="ChEBI" id="CHEBI:29105"/>
        <note>structural</note>
    </ligand>
</feature>
<feature type="binding site" evidence="1">
    <location>
        <position position="160"/>
    </location>
    <ligand>
        <name>AMP</name>
        <dbReference type="ChEBI" id="CHEBI:456215"/>
    </ligand>
</feature>
<feature type="binding site" evidence="1">
    <location>
        <position position="171"/>
    </location>
    <ligand>
        <name>AMP</name>
        <dbReference type="ChEBI" id="CHEBI:456215"/>
    </ligand>
</feature>
<feature type="binding site" evidence="1">
    <location>
        <position position="199"/>
    </location>
    <ligand>
        <name>ATP</name>
        <dbReference type="ChEBI" id="CHEBI:30616"/>
    </ligand>
</feature>
<protein>
    <recommendedName>
        <fullName evidence="1">Adenylate kinase</fullName>
        <shortName evidence="1">AK</shortName>
        <ecNumber evidence="1">2.7.4.3</ecNumber>
    </recommendedName>
    <alternativeName>
        <fullName evidence="1">ATP-AMP transphosphorylase</fullName>
    </alternativeName>
    <alternativeName>
        <fullName evidence="1">ATP:AMP phosphotransferase</fullName>
    </alternativeName>
    <alternativeName>
        <fullName evidence="1">Adenylate monophosphate kinase</fullName>
    </alternativeName>
</protein>
<evidence type="ECO:0000255" key="1">
    <source>
        <dbReference type="HAMAP-Rule" id="MF_00235"/>
    </source>
</evidence>
<accession>Q250L1</accession>
<sequence>MRAILMGPPGAGKGTQAADLITRYQIPHISTGDMFRAAIKAGTALGMKAKEYMDAGSLVPDEVTIGIVAERLAEPDCSKGFLLDGFPRTVAQADALDKILTQLKMNLDGVINIEVPEAKLLERLTGRRICRQCGGTYHMVFNPPAAEAVCDKCGGELYQRSDDTLETAKNRLQVYNDQTQPLIDYYREKGLLKEINGDQDIAQVLQDIVDAMEHGHD</sequence>
<proteinExistence type="inferred from homology"/>
<dbReference type="EC" id="2.7.4.3" evidence="1"/>
<dbReference type="EMBL" id="AP008230">
    <property type="protein sequence ID" value="BAE82281.1"/>
    <property type="molecule type" value="Genomic_DNA"/>
</dbReference>
<dbReference type="RefSeq" id="WP_005810125.1">
    <property type="nucleotide sequence ID" value="NC_007907.1"/>
</dbReference>
<dbReference type="SMR" id="Q250L1"/>
<dbReference type="STRING" id="138119.DSY0492"/>
<dbReference type="KEGG" id="dsy:DSY0492"/>
<dbReference type="eggNOG" id="COG0563">
    <property type="taxonomic scope" value="Bacteria"/>
</dbReference>
<dbReference type="HOGENOM" id="CLU_032354_1_2_9"/>
<dbReference type="UniPathway" id="UPA00588">
    <property type="reaction ID" value="UER00649"/>
</dbReference>
<dbReference type="Proteomes" id="UP000001946">
    <property type="component" value="Chromosome"/>
</dbReference>
<dbReference type="GO" id="GO:0005737">
    <property type="term" value="C:cytoplasm"/>
    <property type="evidence" value="ECO:0007669"/>
    <property type="project" value="UniProtKB-SubCell"/>
</dbReference>
<dbReference type="GO" id="GO:0004017">
    <property type="term" value="F:adenylate kinase activity"/>
    <property type="evidence" value="ECO:0007669"/>
    <property type="project" value="UniProtKB-UniRule"/>
</dbReference>
<dbReference type="GO" id="GO:0005524">
    <property type="term" value="F:ATP binding"/>
    <property type="evidence" value="ECO:0007669"/>
    <property type="project" value="UniProtKB-UniRule"/>
</dbReference>
<dbReference type="GO" id="GO:0008270">
    <property type="term" value="F:zinc ion binding"/>
    <property type="evidence" value="ECO:0007669"/>
    <property type="project" value="UniProtKB-UniRule"/>
</dbReference>
<dbReference type="GO" id="GO:0044209">
    <property type="term" value="P:AMP salvage"/>
    <property type="evidence" value="ECO:0007669"/>
    <property type="project" value="UniProtKB-UniRule"/>
</dbReference>
<dbReference type="CDD" id="cd01428">
    <property type="entry name" value="ADK"/>
    <property type="match status" value="1"/>
</dbReference>
<dbReference type="FunFam" id="3.40.50.300:FF:000106">
    <property type="entry name" value="Adenylate kinase mitochondrial"/>
    <property type="match status" value="1"/>
</dbReference>
<dbReference type="Gene3D" id="3.40.50.300">
    <property type="entry name" value="P-loop containing nucleotide triphosphate hydrolases"/>
    <property type="match status" value="1"/>
</dbReference>
<dbReference type="HAMAP" id="MF_00235">
    <property type="entry name" value="Adenylate_kinase_Adk"/>
    <property type="match status" value="1"/>
</dbReference>
<dbReference type="InterPro" id="IPR006259">
    <property type="entry name" value="Adenyl_kin_sub"/>
</dbReference>
<dbReference type="InterPro" id="IPR000850">
    <property type="entry name" value="Adenylat/UMP-CMP_kin"/>
</dbReference>
<dbReference type="InterPro" id="IPR033690">
    <property type="entry name" value="Adenylat_kinase_CS"/>
</dbReference>
<dbReference type="InterPro" id="IPR007862">
    <property type="entry name" value="Adenylate_kinase_lid-dom"/>
</dbReference>
<dbReference type="InterPro" id="IPR027417">
    <property type="entry name" value="P-loop_NTPase"/>
</dbReference>
<dbReference type="NCBIfam" id="TIGR01351">
    <property type="entry name" value="adk"/>
    <property type="match status" value="1"/>
</dbReference>
<dbReference type="NCBIfam" id="NF001380">
    <property type="entry name" value="PRK00279.1-2"/>
    <property type="match status" value="1"/>
</dbReference>
<dbReference type="NCBIfam" id="NF001381">
    <property type="entry name" value="PRK00279.1-3"/>
    <property type="match status" value="1"/>
</dbReference>
<dbReference type="NCBIfam" id="NF011100">
    <property type="entry name" value="PRK14527.1"/>
    <property type="match status" value="1"/>
</dbReference>
<dbReference type="PANTHER" id="PTHR23359">
    <property type="entry name" value="NUCLEOTIDE KINASE"/>
    <property type="match status" value="1"/>
</dbReference>
<dbReference type="Pfam" id="PF00406">
    <property type="entry name" value="ADK"/>
    <property type="match status" value="1"/>
</dbReference>
<dbReference type="Pfam" id="PF05191">
    <property type="entry name" value="ADK_lid"/>
    <property type="match status" value="1"/>
</dbReference>
<dbReference type="PRINTS" id="PR00094">
    <property type="entry name" value="ADENYLTKNASE"/>
</dbReference>
<dbReference type="SUPFAM" id="SSF52540">
    <property type="entry name" value="P-loop containing nucleoside triphosphate hydrolases"/>
    <property type="match status" value="1"/>
</dbReference>
<dbReference type="PROSITE" id="PS00113">
    <property type="entry name" value="ADENYLATE_KINASE"/>
    <property type="match status" value="1"/>
</dbReference>
<comment type="function">
    <text evidence="1">Catalyzes the reversible transfer of the terminal phosphate group between ATP and AMP. Plays an important role in cellular energy homeostasis and in adenine nucleotide metabolism.</text>
</comment>
<comment type="catalytic activity">
    <reaction evidence="1">
        <text>AMP + ATP = 2 ADP</text>
        <dbReference type="Rhea" id="RHEA:12973"/>
        <dbReference type="ChEBI" id="CHEBI:30616"/>
        <dbReference type="ChEBI" id="CHEBI:456215"/>
        <dbReference type="ChEBI" id="CHEBI:456216"/>
        <dbReference type="EC" id="2.7.4.3"/>
    </reaction>
</comment>
<comment type="pathway">
    <text evidence="1">Purine metabolism; AMP biosynthesis via salvage pathway; AMP from ADP: step 1/1.</text>
</comment>
<comment type="subunit">
    <text evidence="1">Monomer.</text>
</comment>
<comment type="subcellular location">
    <subcellularLocation>
        <location evidence="1">Cytoplasm</location>
    </subcellularLocation>
</comment>
<comment type="domain">
    <text evidence="1">Consists of three domains, a large central CORE domain and two small peripheral domains, NMPbind and LID, which undergo movements during catalysis. The LID domain closes over the site of phosphoryl transfer upon ATP binding. Assembling and dissambling the active center during each catalytic cycle provides an effective means to prevent ATP hydrolysis. Some bacteria have evolved a zinc-coordinating structure that stabilizes the LID domain.</text>
</comment>
<comment type="similarity">
    <text evidence="1">Belongs to the adenylate kinase family.</text>
</comment>